<evidence type="ECO:0000255" key="1">
    <source>
        <dbReference type="HAMAP-Rule" id="MF_00432"/>
    </source>
</evidence>
<evidence type="ECO:0000305" key="2"/>
<accession>A8W3K2</accession>
<proteinExistence type="inferred from homology"/>
<dbReference type="EMBL" id="EU189133">
    <property type="protein sequence ID" value="ABW20577.1"/>
    <property type="molecule type" value="Genomic_DNA"/>
</dbReference>
<dbReference type="RefSeq" id="YP_001531232.1">
    <property type="nucleotide sequence ID" value="NC_009949.1"/>
</dbReference>
<dbReference type="SMR" id="A8W3K2"/>
<dbReference type="GeneID" id="5714779"/>
<dbReference type="GO" id="GO:0009512">
    <property type="term" value="C:cytochrome b6f complex"/>
    <property type="evidence" value="ECO:0007669"/>
    <property type="project" value="InterPro"/>
</dbReference>
<dbReference type="GO" id="GO:0042170">
    <property type="term" value="C:plastid membrane"/>
    <property type="evidence" value="ECO:0007669"/>
    <property type="project" value="UniProtKB-SubCell"/>
</dbReference>
<dbReference type="GO" id="GO:0042651">
    <property type="term" value="C:thylakoid membrane"/>
    <property type="evidence" value="ECO:0007669"/>
    <property type="project" value="UniProtKB-UniRule"/>
</dbReference>
<dbReference type="GO" id="GO:0045158">
    <property type="term" value="F:electron transporter, transferring electrons within cytochrome b6/f complex of photosystem II activity"/>
    <property type="evidence" value="ECO:0007669"/>
    <property type="project" value="UniProtKB-UniRule"/>
</dbReference>
<dbReference type="GO" id="GO:0017004">
    <property type="term" value="P:cytochrome complex assembly"/>
    <property type="evidence" value="ECO:0007669"/>
    <property type="project" value="UniProtKB-UniRule"/>
</dbReference>
<dbReference type="GO" id="GO:0015979">
    <property type="term" value="P:photosynthesis"/>
    <property type="evidence" value="ECO:0007669"/>
    <property type="project" value="UniProtKB-KW"/>
</dbReference>
<dbReference type="HAMAP" id="MF_00432">
    <property type="entry name" value="Cytb6_f_PetG"/>
    <property type="match status" value="1"/>
</dbReference>
<dbReference type="InterPro" id="IPR003683">
    <property type="entry name" value="Cyt_6/f_cplx_su5"/>
</dbReference>
<dbReference type="InterPro" id="IPR036099">
    <property type="entry name" value="Cyt_6/f_cplx_su5_sf"/>
</dbReference>
<dbReference type="NCBIfam" id="NF001907">
    <property type="entry name" value="PRK00665.1"/>
    <property type="match status" value="1"/>
</dbReference>
<dbReference type="Pfam" id="PF02529">
    <property type="entry name" value="PetG"/>
    <property type="match status" value="1"/>
</dbReference>
<dbReference type="PIRSF" id="PIRSF000034">
    <property type="entry name" value="Cyt_b6-f_V"/>
    <property type="match status" value="1"/>
</dbReference>
<dbReference type="SUPFAM" id="SSF103446">
    <property type="entry name" value="PetG subunit of the cytochrome b6f complex"/>
    <property type="match status" value="1"/>
</dbReference>
<sequence length="37" mass="4224">MIEPFLLGIILGLIPITLIGLFVTAYLQYRRGDQLDF</sequence>
<comment type="function">
    <text evidence="1">Component of the cytochrome b6-f complex, which mediates electron transfer between photosystem II (PSII) and photosystem I (PSI), cyclic electron flow around PSI, and state transitions. PetG is required for either the stability or assembly of the cytochrome b6-f complex.</text>
</comment>
<comment type="subunit">
    <text evidence="1">The 4 large subunits of the cytochrome b6-f complex are cytochrome b6, subunit IV (17 kDa polypeptide, PetD), cytochrome f and the Rieske protein, while the 4 small subunits are PetG, PetL, PetM and PetN. The complex functions as a dimer.</text>
</comment>
<comment type="subcellular location">
    <subcellularLocation>
        <location evidence="2">Plastid membrane</location>
        <topology evidence="1">Single-pass membrane protein</topology>
    </subcellularLocation>
</comment>
<comment type="similarity">
    <text evidence="1">Belongs to the PetG family.</text>
</comment>
<comment type="caution">
    <text evidence="2">Only inflorescences, fruits, starved seedlings and stressed stem tips are green in this organism.</text>
</comment>
<feature type="chain" id="PRO_0000355383" description="Cytochrome b6-f complex subunit 5">
    <location>
        <begin position="1"/>
        <end position="37"/>
    </location>
</feature>
<feature type="transmembrane region" description="Helical" evidence="1">
    <location>
        <begin position="5"/>
        <end position="25"/>
    </location>
</feature>
<organism>
    <name type="scientific">Cuscuta obtusiflora</name>
    <name type="common">Peruvian dodder</name>
    <dbReference type="NCBI Taxonomy" id="437280"/>
    <lineage>
        <taxon>Eukaryota</taxon>
        <taxon>Viridiplantae</taxon>
        <taxon>Streptophyta</taxon>
        <taxon>Embryophyta</taxon>
        <taxon>Tracheophyta</taxon>
        <taxon>Spermatophyta</taxon>
        <taxon>Magnoliopsida</taxon>
        <taxon>eudicotyledons</taxon>
        <taxon>Gunneridae</taxon>
        <taxon>Pentapetalae</taxon>
        <taxon>asterids</taxon>
        <taxon>lamiids</taxon>
        <taxon>Solanales</taxon>
        <taxon>Convolvulaceae</taxon>
        <taxon>Cuscuteae</taxon>
        <taxon>Cuscuta</taxon>
        <taxon>Cuscuta subgen. Grammica</taxon>
        <taxon>Cuscuta sect. Cleistogrammica</taxon>
    </lineage>
</organism>
<name>PETG_CUSOB</name>
<protein>
    <recommendedName>
        <fullName evidence="1">Cytochrome b6-f complex subunit 5</fullName>
    </recommendedName>
    <alternativeName>
        <fullName evidence="1">Cytochrome b6-f complex subunit PetG</fullName>
    </alternativeName>
    <alternativeName>
        <fullName evidence="1">Cytochrome b6-f complex subunit V</fullName>
    </alternativeName>
</protein>
<keyword id="KW-0249">Electron transport</keyword>
<keyword id="KW-0472">Membrane</keyword>
<keyword id="KW-0602">Photosynthesis</keyword>
<keyword id="KW-0934">Plastid</keyword>
<keyword id="KW-0812">Transmembrane</keyword>
<keyword id="KW-1133">Transmembrane helix</keyword>
<keyword id="KW-0813">Transport</keyword>
<reference key="1">
    <citation type="journal article" date="2007" name="BMC Plant Biol.">
        <title>Complete plastid genome sequences suggest strong selection for retention of photosynthetic genes in the parasitic plant genus Cuscuta.</title>
        <authorList>
            <person name="McNeal J.R."/>
            <person name="Kuehl J.V."/>
            <person name="Boore J.L."/>
            <person name="dePamphilis C.W."/>
        </authorList>
    </citation>
    <scope>NUCLEOTIDE SEQUENCE [LARGE SCALE GENOMIC DNA]</scope>
</reference>
<geneLocation type="plastid"/>
<gene>
    <name evidence="1" type="primary">petG</name>
</gene>